<comment type="catalytic activity">
    <reaction evidence="1">
        <text>1-(5-phospho-beta-D-ribosyl)-5-[(5-phospho-beta-D-ribosylamino)methylideneamino]imidazole-4-carboxamide = 5-[(5-phospho-1-deoxy-D-ribulos-1-ylimino)methylamino]-1-(5-phospho-beta-D-ribosyl)imidazole-4-carboxamide</text>
        <dbReference type="Rhea" id="RHEA:15469"/>
        <dbReference type="ChEBI" id="CHEBI:58435"/>
        <dbReference type="ChEBI" id="CHEBI:58525"/>
        <dbReference type="EC" id="5.3.1.16"/>
    </reaction>
</comment>
<comment type="pathway">
    <text evidence="1">Amino-acid biosynthesis; L-histidine biosynthesis; L-histidine from 5-phospho-alpha-D-ribose 1-diphosphate: step 4/9.</text>
</comment>
<comment type="subcellular location">
    <subcellularLocation>
        <location evidence="1">Cytoplasm</location>
    </subcellularLocation>
</comment>
<comment type="similarity">
    <text evidence="1">Belongs to the HisA/HisF family.</text>
</comment>
<reference key="1">
    <citation type="journal article" date="2008" name="J. Bacteriol.">
        <title>Insights into plant cell wall degradation from the genome sequence of the soil bacterium Cellvibrio japonicus.</title>
        <authorList>
            <person name="DeBoy R.T."/>
            <person name="Mongodin E.F."/>
            <person name="Fouts D.E."/>
            <person name="Tailford L.E."/>
            <person name="Khouri H."/>
            <person name="Emerson J.B."/>
            <person name="Mohamoud Y."/>
            <person name="Watkins K."/>
            <person name="Henrissat B."/>
            <person name="Gilbert H.J."/>
            <person name="Nelson K.E."/>
        </authorList>
    </citation>
    <scope>NUCLEOTIDE SEQUENCE [LARGE SCALE GENOMIC DNA]</scope>
    <source>
        <strain>Ueda107</strain>
    </source>
</reference>
<organism>
    <name type="scientific">Cellvibrio japonicus (strain Ueda107)</name>
    <name type="common">Pseudomonas fluorescens subsp. cellulosa</name>
    <dbReference type="NCBI Taxonomy" id="498211"/>
    <lineage>
        <taxon>Bacteria</taxon>
        <taxon>Pseudomonadati</taxon>
        <taxon>Pseudomonadota</taxon>
        <taxon>Gammaproteobacteria</taxon>
        <taxon>Cellvibrionales</taxon>
        <taxon>Cellvibrionaceae</taxon>
        <taxon>Cellvibrio</taxon>
    </lineage>
</organism>
<evidence type="ECO:0000255" key="1">
    <source>
        <dbReference type="HAMAP-Rule" id="MF_01014"/>
    </source>
</evidence>
<feature type="chain" id="PRO_1000135092" description="1-(5-phosphoribosyl)-5-[(5-phosphoribosylamino)methylideneamino] imidazole-4-carboxamide isomerase">
    <location>
        <begin position="1"/>
        <end position="243"/>
    </location>
</feature>
<feature type="active site" description="Proton acceptor" evidence="1">
    <location>
        <position position="8"/>
    </location>
</feature>
<feature type="active site" description="Proton donor" evidence="1">
    <location>
        <position position="130"/>
    </location>
</feature>
<keyword id="KW-0028">Amino-acid biosynthesis</keyword>
<keyword id="KW-0963">Cytoplasm</keyword>
<keyword id="KW-0368">Histidine biosynthesis</keyword>
<keyword id="KW-0413">Isomerase</keyword>
<keyword id="KW-1185">Reference proteome</keyword>
<accession>B3PGA3</accession>
<dbReference type="EC" id="5.3.1.16" evidence="1"/>
<dbReference type="EMBL" id="CP000934">
    <property type="protein sequence ID" value="ACE83542.1"/>
    <property type="molecule type" value="Genomic_DNA"/>
</dbReference>
<dbReference type="RefSeq" id="WP_012485841.1">
    <property type="nucleotide sequence ID" value="NC_010995.1"/>
</dbReference>
<dbReference type="SMR" id="B3PGA3"/>
<dbReference type="STRING" id="498211.CJA_0158"/>
<dbReference type="KEGG" id="cja:CJA_0158"/>
<dbReference type="eggNOG" id="COG0106">
    <property type="taxonomic scope" value="Bacteria"/>
</dbReference>
<dbReference type="HOGENOM" id="CLU_048577_1_1_6"/>
<dbReference type="OrthoDB" id="9807749at2"/>
<dbReference type="UniPathway" id="UPA00031">
    <property type="reaction ID" value="UER00009"/>
</dbReference>
<dbReference type="Proteomes" id="UP000001036">
    <property type="component" value="Chromosome"/>
</dbReference>
<dbReference type="GO" id="GO:0005737">
    <property type="term" value="C:cytoplasm"/>
    <property type="evidence" value="ECO:0007669"/>
    <property type="project" value="UniProtKB-SubCell"/>
</dbReference>
<dbReference type="GO" id="GO:0003949">
    <property type="term" value="F:1-(5-phosphoribosyl)-5-[(5-phosphoribosylamino)methylideneamino]imidazole-4-carboxamide isomerase activity"/>
    <property type="evidence" value="ECO:0007669"/>
    <property type="project" value="UniProtKB-UniRule"/>
</dbReference>
<dbReference type="GO" id="GO:0000105">
    <property type="term" value="P:L-histidine biosynthetic process"/>
    <property type="evidence" value="ECO:0007669"/>
    <property type="project" value="UniProtKB-UniRule"/>
</dbReference>
<dbReference type="GO" id="GO:0000162">
    <property type="term" value="P:L-tryptophan biosynthetic process"/>
    <property type="evidence" value="ECO:0007669"/>
    <property type="project" value="TreeGrafter"/>
</dbReference>
<dbReference type="CDD" id="cd04732">
    <property type="entry name" value="HisA"/>
    <property type="match status" value="1"/>
</dbReference>
<dbReference type="FunFam" id="3.20.20.70:FF:000009">
    <property type="entry name" value="1-(5-phosphoribosyl)-5-[(5-phosphoribosylamino)methylideneamino] imidazole-4-carboxamide isomerase"/>
    <property type="match status" value="1"/>
</dbReference>
<dbReference type="Gene3D" id="3.20.20.70">
    <property type="entry name" value="Aldolase class I"/>
    <property type="match status" value="1"/>
</dbReference>
<dbReference type="HAMAP" id="MF_01014">
    <property type="entry name" value="HisA"/>
    <property type="match status" value="1"/>
</dbReference>
<dbReference type="InterPro" id="IPR013785">
    <property type="entry name" value="Aldolase_TIM"/>
</dbReference>
<dbReference type="InterPro" id="IPR006062">
    <property type="entry name" value="His_biosynth"/>
</dbReference>
<dbReference type="InterPro" id="IPR006063">
    <property type="entry name" value="HisA_bact_arch"/>
</dbReference>
<dbReference type="InterPro" id="IPR044524">
    <property type="entry name" value="Isoase_HisA-like"/>
</dbReference>
<dbReference type="InterPro" id="IPR023016">
    <property type="entry name" value="Isoase_HisA-like_bact"/>
</dbReference>
<dbReference type="InterPro" id="IPR011060">
    <property type="entry name" value="RibuloseP-bd_barrel"/>
</dbReference>
<dbReference type="NCBIfam" id="TIGR00007">
    <property type="entry name" value="1-(5-phosphoribosyl)-5-[(5-phosphoribosylamino)methylideneamino]imidazole-4-carboxamide isomerase"/>
    <property type="match status" value="1"/>
</dbReference>
<dbReference type="NCBIfam" id="NF010112">
    <property type="entry name" value="PRK13585.1"/>
    <property type="match status" value="1"/>
</dbReference>
<dbReference type="PANTHER" id="PTHR43090">
    <property type="entry name" value="1-(5-PHOSPHORIBOSYL)-5-[(5-PHOSPHORIBOSYLAMINO)METHYLIDENEAMINO] IMIDAZOLE-4-CARBOXAMIDE ISOMERASE"/>
    <property type="match status" value="1"/>
</dbReference>
<dbReference type="PANTHER" id="PTHR43090:SF2">
    <property type="entry name" value="1-(5-PHOSPHORIBOSYL)-5-[(5-PHOSPHORIBOSYLAMINO)METHYLIDENEAMINO] IMIDAZOLE-4-CARBOXAMIDE ISOMERASE"/>
    <property type="match status" value="1"/>
</dbReference>
<dbReference type="Pfam" id="PF00977">
    <property type="entry name" value="His_biosynth"/>
    <property type="match status" value="1"/>
</dbReference>
<dbReference type="SUPFAM" id="SSF51366">
    <property type="entry name" value="Ribulose-phoshate binding barrel"/>
    <property type="match status" value="1"/>
</dbReference>
<sequence length="243" mass="25746">MLIIPAIDLKDGQCVRLRQGLMDDSTVFSDDPVAMARQWVDQGCRRLHLVDLNGAFEGKPVNGGVVTAIAKAYPGLPIQIGGGIRSAATIEYYLQAGVQSVIIGTKAVKEPQFVTDMCKAFPGHIIVGLDAKDGWVATDGWAEVSNVQATELAKRFEQDGVSSIVYTDIARDGMMQGVNVQATVTMAQASSIPVIASGGITNMDDIRALKAEAHKGICGAITGRAIYEGTLNMAEAQAYCDAN</sequence>
<protein>
    <recommendedName>
        <fullName evidence="1">1-(5-phosphoribosyl)-5-[(5-phosphoribosylamino)methylideneamino] imidazole-4-carboxamide isomerase</fullName>
        <ecNumber evidence="1">5.3.1.16</ecNumber>
    </recommendedName>
    <alternativeName>
        <fullName evidence="1">Phosphoribosylformimino-5-aminoimidazole carboxamide ribotide isomerase</fullName>
    </alternativeName>
</protein>
<gene>
    <name evidence="1" type="primary">hisA</name>
    <name type="ordered locus">CJA_0158</name>
</gene>
<proteinExistence type="inferred from homology"/>
<name>HIS4_CELJU</name>